<dbReference type="EMBL" id="AB065520">
    <property type="protein sequence ID" value="BAC05768.1"/>
    <property type="molecule type" value="Genomic_DNA"/>
</dbReference>
<dbReference type="EMBL" id="BK004398">
    <property type="protein sequence ID" value="DAA04796.1"/>
    <property type="molecule type" value="Genomic_DNA"/>
</dbReference>
<dbReference type="CCDS" id="CCDS31513.1"/>
<dbReference type="RefSeq" id="NP_001001960.1">
    <property type="nucleotide sequence ID" value="NM_001001960.1"/>
</dbReference>
<dbReference type="SMR" id="Q8NH69"/>
<dbReference type="FunCoup" id="Q8NH69">
    <property type="interactions" value="416"/>
</dbReference>
<dbReference type="STRING" id="9606.ENSP00000342448"/>
<dbReference type="GlyCosmos" id="Q8NH69">
    <property type="glycosylation" value="1 site, No reported glycans"/>
</dbReference>
<dbReference type="GlyGen" id="Q8NH69">
    <property type="glycosylation" value="1 site"/>
</dbReference>
<dbReference type="BioMuta" id="OR5W2"/>
<dbReference type="DMDM" id="74762590"/>
<dbReference type="MassIVE" id="Q8NH69"/>
<dbReference type="PaxDb" id="9606-ENSP00000342448"/>
<dbReference type="PeptideAtlas" id="Q8NH69"/>
<dbReference type="Antibodypedia" id="58948">
    <property type="antibodies" value="95 antibodies from 20 providers"/>
</dbReference>
<dbReference type="DNASU" id="390148"/>
<dbReference type="Ensembl" id="ENST00000344514.1">
    <property type="protein sequence ID" value="ENSP00000342448.1"/>
    <property type="gene ID" value="ENSG00000187612.1"/>
</dbReference>
<dbReference type="GeneID" id="390148"/>
<dbReference type="KEGG" id="hsa:390148"/>
<dbReference type="MANE-Select" id="ENST00000344514.1">
    <property type="protein sequence ID" value="ENSP00000342448.1"/>
    <property type="RefSeq nucleotide sequence ID" value="NM_001001960.1"/>
    <property type="RefSeq protein sequence ID" value="NP_001001960.1"/>
</dbReference>
<dbReference type="UCSC" id="uc010rir.2">
    <property type="organism name" value="human"/>
</dbReference>
<dbReference type="AGR" id="HGNC:15299"/>
<dbReference type="CTD" id="390148"/>
<dbReference type="GeneCards" id="OR5W2"/>
<dbReference type="HGNC" id="HGNC:15299">
    <property type="gene designation" value="OR5W2"/>
</dbReference>
<dbReference type="HPA" id="ENSG00000187612">
    <property type="expression patterns" value="Not detected"/>
</dbReference>
<dbReference type="neXtProt" id="NX_Q8NH69"/>
<dbReference type="PharmGKB" id="PA32572"/>
<dbReference type="VEuPathDB" id="HostDB:ENSG00000187612"/>
<dbReference type="eggNOG" id="ENOG502RF13">
    <property type="taxonomic scope" value="Eukaryota"/>
</dbReference>
<dbReference type="GeneTree" id="ENSGT01130000278309"/>
<dbReference type="HOGENOM" id="CLU_012526_1_0_1"/>
<dbReference type="InParanoid" id="Q8NH69"/>
<dbReference type="OMA" id="MDWENCS"/>
<dbReference type="OrthoDB" id="9575991at2759"/>
<dbReference type="PAN-GO" id="Q8NH69">
    <property type="GO annotations" value="2 GO annotations based on evolutionary models"/>
</dbReference>
<dbReference type="PhylomeDB" id="Q8NH69"/>
<dbReference type="TreeFam" id="TF352753"/>
<dbReference type="PathwayCommons" id="Q8NH69"/>
<dbReference type="Reactome" id="R-HSA-9752946">
    <property type="pathway name" value="Expression and translocation of olfactory receptors"/>
</dbReference>
<dbReference type="BioGRID-ORCS" id="390148">
    <property type="hits" value="8 hits in 741 CRISPR screens"/>
</dbReference>
<dbReference type="GeneWiki" id="OR5W2"/>
<dbReference type="GenomeRNAi" id="390148"/>
<dbReference type="Pharos" id="Q8NH69">
    <property type="development level" value="Tdark"/>
</dbReference>
<dbReference type="PRO" id="PR:Q8NH69"/>
<dbReference type="Proteomes" id="UP000005640">
    <property type="component" value="Chromosome 11"/>
</dbReference>
<dbReference type="RNAct" id="Q8NH69">
    <property type="molecule type" value="protein"/>
</dbReference>
<dbReference type="Bgee" id="ENSG00000187612">
    <property type="expression patterns" value="Expressed in male germ line stem cell (sensu Vertebrata) in testis and 2 other cell types or tissues"/>
</dbReference>
<dbReference type="GO" id="GO:0005886">
    <property type="term" value="C:plasma membrane"/>
    <property type="evidence" value="ECO:0007669"/>
    <property type="project" value="UniProtKB-SubCell"/>
</dbReference>
<dbReference type="GO" id="GO:0004930">
    <property type="term" value="F:G protein-coupled receptor activity"/>
    <property type="evidence" value="ECO:0007669"/>
    <property type="project" value="UniProtKB-KW"/>
</dbReference>
<dbReference type="GO" id="GO:0005549">
    <property type="term" value="F:odorant binding"/>
    <property type="evidence" value="ECO:0000318"/>
    <property type="project" value="GO_Central"/>
</dbReference>
<dbReference type="GO" id="GO:0004984">
    <property type="term" value="F:olfactory receptor activity"/>
    <property type="evidence" value="ECO:0000318"/>
    <property type="project" value="GO_Central"/>
</dbReference>
<dbReference type="CDD" id="cd15945">
    <property type="entry name" value="7tmA_OR5C1-like"/>
    <property type="match status" value="1"/>
</dbReference>
<dbReference type="FunFam" id="1.10.1220.70:FF:000001">
    <property type="entry name" value="Olfactory receptor"/>
    <property type="match status" value="1"/>
</dbReference>
<dbReference type="FunFam" id="1.20.1070.10:FF:000003">
    <property type="entry name" value="Olfactory receptor"/>
    <property type="match status" value="1"/>
</dbReference>
<dbReference type="Gene3D" id="1.20.1070.10">
    <property type="entry name" value="Rhodopsin 7-helix transmembrane proteins"/>
    <property type="match status" value="1"/>
</dbReference>
<dbReference type="InterPro" id="IPR000276">
    <property type="entry name" value="GPCR_Rhodpsn"/>
</dbReference>
<dbReference type="InterPro" id="IPR017452">
    <property type="entry name" value="GPCR_Rhodpsn_7TM"/>
</dbReference>
<dbReference type="InterPro" id="IPR000725">
    <property type="entry name" value="Olfact_rcpt"/>
</dbReference>
<dbReference type="PANTHER" id="PTHR48018">
    <property type="entry name" value="OLFACTORY RECEPTOR"/>
    <property type="match status" value="1"/>
</dbReference>
<dbReference type="Pfam" id="PF13853">
    <property type="entry name" value="7tm_4"/>
    <property type="match status" value="1"/>
</dbReference>
<dbReference type="PRINTS" id="PR00237">
    <property type="entry name" value="GPCRRHODOPSN"/>
</dbReference>
<dbReference type="PRINTS" id="PR00245">
    <property type="entry name" value="OLFACTORYR"/>
</dbReference>
<dbReference type="SUPFAM" id="SSF81321">
    <property type="entry name" value="Family A G protein-coupled receptor-like"/>
    <property type="match status" value="1"/>
</dbReference>
<dbReference type="PROSITE" id="PS00237">
    <property type="entry name" value="G_PROTEIN_RECEP_F1_1"/>
    <property type="match status" value="1"/>
</dbReference>
<dbReference type="PROSITE" id="PS50262">
    <property type="entry name" value="G_PROTEIN_RECEP_F1_2"/>
    <property type="match status" value="1"/>
</dbReference>
<reference key="1">
    <citation type="submission" date="2001-07" db="EMBL/GenBank/DDBJ databases">
        <title>Genome-wide discovery and analysis of human seven transmembrane helix receptor genes.</title>
        <authorList>
            <person name="Suwa M."/>
            <person name="Sato T."/>
            <person name="Okouchi I."/>
            <person name="Arita M."/>
            <person name="Futami K."/>
            <person name="Matsumoto S."/>
            <person name="Tsutsumi S."/>
            <person name="Aburatani H."/>
            <person name="Asai K."/>
            <person name="Akiyama Y."/>
        </authorList>
    </citation>
    <scope>NUCLEOTIDE SEQUENCE [GENOMIC DNA]</scope>
</reference>
<reference key="2">
    <citation type="journal article" date="2004" name="Proc. Natl. Acad. Sci. U.S.A.">
        <title>The human olfactory receptor gene family.</title>
        <authorList>
            <person name="Malnic B."/>
            <person name="Godfrey P.A."/>
            <person name="Buck L.B."/>
        </authorList>
    </citation>
    <scope>IDENTIFICATION</scope>
</reference>
<reference key="3">
    <citation type="journal article" date="2004" name="Proc. Natl. Acad. Sci. U.S.A.">
        <authorList>
            <person name="Malnic B."/>
            <person name="Godfrey P.A."/>
            <person name="Buck L.B."/>
        </authorList>
    </citation>
    <scope>ERRATUM OF PUBMED:14983052</scope>
</reference>
<name>OR5W2_HUMAN</name>
<feature type="chain" id="PRO_0000150618" description="Olfactory receptor 5W2">
    <location>
        <begin position="1"/>
        <end position="310"/>
    </location>
</feature>
<feature type="topological domain" description="Extracellular" evidence="1">
    <location>
        <begin position="1"/>
        <end position="25"/>
    </location>
</feature>
<feature type="transmembrane region" description="Helical; Name=1" evidence="1">
    <location>
        <begin position="26"/>
        <end position="46"/>
    </location>
</feature>
<feature type="topological domain" description="Cytoplasmic" evidence="1">
    <location>
        <begin position="47"/>
        <end position="54"/>
    </location>
</feature>
<feature type="transmembrane region" description="Helical; Name=2" evidence="1">
    <location>
        <begin position="55"/>
        <end position="75"/>
    </location>
</feature>
<feature type="topological domain" description="Extracellular" evidence="1">
    <location>
        <begin position="76"/>
        <end position="99"/>
    </location>
</feature>
<feature type="transmembrane region" description="Helical; Name=3" evidence="1">
    <location>
        <begin position="100"/>
        <end position="120"/>
    </location>
</feature>
<feature type="topological domain" description="Cytoplasmic" evidence="1">
    <location>
        <begin position="121"/>
        <end position="139"/>
    </location>
</feature>
<feature type="transmembrane region" description="Helical; Name=4" evidence="1">
    <location>
        <begin position="140"/>
        <end position="160"/>
    </location>
</feature>
<feature type="topological domain" description="Extracellular" evidence="1">
    <location>
        <begin position="161"/>
        <end position="196"/>
    </location>
</feature>
<feature type="transmembrane region" description="Helical; Name=5" evidence="1">
    <location>
        <begin position="197"/>
        <end position="217"/>
    </location>
</feature>
<feature type="topological domain" description="Cytoplasmic" evidence="1">
    <location>
        <begin position="218"/>
        <end position="237"/>
    </location>
</feature>
<feature type="transmembrane region" description="Helical; Name=6" evidence="1">
    <location>
        <begin position="238"/>
        <end position="258"/>
    </location>
</feature>
<feature type="topological domain" description="Extracellular" evidence="1">
    <location>
        <begin position="259"/>
        <end position="271"/>
    </location>
</feature>
<feature type="transmembrane region" description="Helical; Name=7" evidence="1">
    <location>
        <begin position="272"/>
        <end position="292"/>
    </location>
</feature>
<feature type="topological domain" description="Cytoplasmic" evidence="1">
    <location>
        <begin position="293"/>
        <end position="310"/>
    </location>
</feature>
<feature type="glycosylation site" description="N-linked (GlcNAc...) asparagine" evidence="1">
    <location>
        <position position="5"/>
    </location>
</feature>
<feature type="sequence variant" id="VAR_053213" description="In dbSNP:rs17511797.">
    <original>F</original>
    <variation>L</variation>
    <location>
        <position position="39"/>
    </location>
</feature>
<feature type="sequence variant" id="VAR_053214" description="In dbSNP:rs12419022.">
    <original>H</original>
    <variation>R</variation>
    <location>
        <position position="65"/>
    </location>
</feature>
<feature type="sequence variant" id="VAR_053215" description="In dbSNP:rs17596519.">
    <original>M</original>
    <variation>T</variation>
    <location>
        <position position="160"/>
    </location>
</feature>
<feature type="sequence variant" id="VAR_034236" description="In dbSNP:rs17148883.">
    <original>A</original>
    <variation>P</variation>
    <location>
        <position position="163"/>
    </location>
</feature>
<feature type="sequence variant" id="VAR_034237" description="In dbSNP:rs2457239.">
    <original>R</original>
    <variation>C</variation>
    <location>
        <position position="189"/>
    </location>
</feature>
<feature type="sequence variant" id="VAR_053216" description="In dbSNP:rs17596422.">
    <original>F</original>
    <variation>L</variation>
    <location>
        <position position="215"/>
    </location>
</feature>
<feature type="sequence variant" id="VAR_062046" description="In dbSNP:rs34573569.">
    <original>F</original>
    <variation>Y</variation>
    <location>
        <position position="310"/>
    </location>
</feature>
<protein>
    <recommendedName>
        <fullName>Olfactory receptor 5W2</fullName>
    </recommendedName>
    <alternativeName>
        <fullName>Olfactory receptor 5W3</fullName>
    </alternativeName>
    <alternativeName>
        <fullName>Olfactory receptor OR11-155</fullName>
    </alternativeName>
</protein>
<gene>
    <name type="primary">OR5W2</name>
    <name type="synonym">OR5W2P</name>
    <name type="synonym">OR5W3P</name>
</gene>
<accession>Q8NH69</accession>
<proteinExistence type="inferred from homology"/>
<comment type="function">
    <text evidence="3">Odorant receptor.</text>
</comment>
<comment type="subcellular location">
    <subcellularLocation>
        <location>Cell membrane</location>
        <topology>Multi-pass membrane protein</topology>
    </subcellularLocation>
</comment>
<comment type="similarity">
    <text evidence="2">Belongs to the G-protein coupled receptor 1 family.</text>
</comment>
<comment type="online information" name="Human Olfactory Receptor Data Exploratorium (HORDE)">
    <link uri="http://genome.weizmann.ac.il/horde/card/index/symbol:OR5W2"/>
</comment>
<organism>
    <name type="scientific">Homo sapiens</name>
    <name type="common">Human</name>
    <dbReference type="NCBI Taxonomy" id="9606"/>
    <lineage>
        <taxon>Eukaryota</taxon>
        <taxon>Metazoa</taxon>
        <taxon>Chordata</taxon>
        <taxon>Craniata</taxon>
        <taxon>Vertebrata</taxon>
        <taxon>Euteleostomi</taxon>
        <taxon>Mammalia</taxon>
        <taxon>Eutheria</taxon>
        <taxon>Euarchontoglires</taxon>
        <taxon>Primates</taxon>
        <taxon>Haplorrhini</taxon>
        <taxon>Catarrhini</taxon>
        <taxon>Hominidae</taxon>
        <taxon>Homo</taxon>
    </lineage>
</organism>
<evidence type="ECO:0000255" key="1"/>
<evidence type="ECO:0000255" key="2">
    <source>
        <dbReference type="PROSITE-ProRule" id="PRU00521"/>
    </source>
</evidence>
<evidence type="ECO:0000305" key="3"/>
<keyword id="KW-1003">Cell membrane</keyword>
<keyword id="KW-0297">G-protein coupled receptor</keyword>
<keyword id="KW-0325">Glycoprotein</keyword>
<keyword id="KW-0472">Membrane</keyword>
<keyword id="KW-0552">Olfaction</keyword>
<keyword id="KW-0675">Receptor</keyword>
<keyword id="KW-1185">Reference proteome</keyword>
<keyword id="KW-0716">Sensory transduction</keyword>
<keyword id="KW-0807">Transducer</keyword>
<keyword id="KW-0812">Transmembrane</keyword>
<keyword id="KW-1133">Transmembrane helix</keyword>
<sequence>MDWENCSSLTDFFLLGITNNPEMKVTLFAVFLAVYIINFSANLGMIVLIRMDYQLHTPMYFFLSHLSFCDLCYSTATGPKMLVDLLAKNKSIPFYGCALQFLVFCIFADSECLLLSVMAFDRYKAIINPLLYTVNMSSRVCYLLLTGVYLVGIADALIHMTLAFRLCFCGSNEINHFFCDIPPLLLLSRSDTQVNELVLFTVFGFIELSTISGVFISYCYIILSVLEIHSAEGRFKALSTCTSHLSAVAIFQGTLLFMYFRPSSSYSLDQDKMTSLFYTLVVPMLNPLIYSLRNKDVKEALKKLKNKILF</sequence>